<gene>
    <name evidence="1" type="primary">gcvP1</name>
    <name type="ordered locus">Pfl01_4392</name>
</gene>
<feature type="chain" id="PRO_0000227118" description="Glycine dehydrogenase (decarboxylating) 1">
    <location>
        <begin position="1"/>
        <end position="950"/>
    </location>
</feature>
<feature type="modified residue" description="N6-(pyridoxal phosphate)lysine" evidence="1">
    <location>
        <position position="704"/>
    </location>
</feature>
<proteinExistence type="inferred from homology"/>
<sequence>MTQVNLGTANEFIARHIGPRAGDEQAMLNSLGFDSLEALSASVIPESIKGTSVLGLDDGLSEADALAMIKGIAGKNQLFKTYIGQGYYNCHTPSPILRNLLENPAWYTAYTPYQPEISQGRLEALLNFQTLISDLTGLPIANASLLDEATAAAEAMTFCKRLSKNKGSHQFFASIHSHTQTLDVLRTRAEPLGIDVVVGDERELTDVTPFFGALLQYPASNGDVFDYRELTERFHAANALVAVAADLLALTLLTPPGEFGADVAIGSAQRFGVPLGFGGPHAAYFSTKDAFKRDMPGRLVGVSVDRFGKPALRLAMQTREQHIRREKATSNICTAQVLLANIASMYAVYHGPKGLTQIANRVHHLTAILAKGLSALGVTVEQTSFFDTLTLATGAQTAALHDKARAQQINLRVIDAQRLGLSVDETTTQADIETLWGLFADGKTLPDFAALAAAAQSTIPASLVRQSPILSHPVFNRYHSETELMRYLRKLADKDLALDRTMIPLGSCTMKLNAASEMIPVTWAEFGALHPFAPAEQSAGYQQLTDELEAMLCAATGYDSISLQPNAGSQGEYAGLLAIRAYHQSRGEDRRDICLIPSSAHGTNPATANMAGMRVVVTACDARGNVDIEDLRAKAIEHREHLAALMITYPSTHGVFEEGIREICGIIHDNGGQVYIDGANMNAMVGLCAPGKFGGDVSHLNLHKTFCIPHGGGGPGVGPIGVKSHLTPFLPGHGHMERKEGAVCAAPFGSASILPITWMYIRMMGGAGLKRASQLAILNANYISRRLEEHYPVLYTGSNGLVAHECILDLRPLKDSSGISVDDVAKRLIDFGFHAPTMSFPVAGTLMIEPTESESKEELDRFCDAMIRIREEIRAVENGTLDKDDNPLKNAPHTAAELVGEWTHPYSREQAVYPVASLIEGKYWPPVGRVDNVFGDRNLVCACPSIESYA</sequence>
<evidence type="ECO:0000255" key="1">
    <source>
        <dbReference type="HAMAP-Rule" id="MF_00711"/>
    </source>
</evidence>
<keyword id="KW-0560">Oxidoreductase</keyword>
<keyword id="KW-0663">Pyridoxal phosphate</keyword>
<accession>Q3K7X5</accession>
<comment type="function">
    <text evidence="1">The glycine cleavage system catalyzes the degradation of glycine. The P protein binds the alpha-amino group of glycine through its pyridoxal phosphate cofactor; CO(2) is released and the remaining methylamine moiety is then transferred to the lipoamide cofactor of the H protein.</text>
</comment>
<comment type="catalytic activity">
    <reaction evidence="1">
        <text>N(6)-[(R)-lipoyl]-L-lysyl-[glycine-cleavage complex H protein] + glycine + H(+) = N(6)-[(R)-S(8)-aminomethyldihydrolipoyl]-L-lysyl-[glycine-cleavage complex H protein] + CO2</text>
        <dbReference type="Rhea" id="RHEA:24304"/>
        <dbReference type="Rhea" id="RHEA-COMP:10494"/>
        <dbReference type="Rhea" id="RHEA-COMP:10495"/>
        <dbReference type="ChEBI" id="CHEBI:15378"/>
        <dbReference type="ChEBI" id="CHEBI:16526"/>
        <dbReference type="ChEBI" id="CHEBI:57305"/>
        <dbReference type="ChEBI" id="CHEBI:83099"/>
        <dbReference type="ChEBI" id="CHEBI:83143"/>
        <dbReference type="EC" id="1.4.4.2"/>
    </reaction>
</comment>
<comment type="cofactor">
    <cofactor evidence="1">
        <name>pyridoxal 5'-phosphate</name>
        <dbReference type="ChEBI" id="CHEBI:597326"/>
    </cofactor>
</comment>
<comment type="subunit">
    <text evidence="1">The glycine cleavage system is composed of four proteins: P, T, L and H.</text>
</comment>
<comment type="similarity">
    <text evidence="1">Belongs to the GcvP family.</text>
</comment>
<reference key="1">
    <citation type="journal article" date="2009" name="Genome Biol.">
        <title>Genomic and genetic analyses of diversity and plant interactions of Pseudomonas fluorescens.</title>
        <authorList>
            <person name="Silby M.W."/>
            <person name="Cerdeno-Tarraga A.M."/>
            <person name="Vernikos G.S."/>
            <person name="Giddens S.R."/>
            <person name="Jackson R.W."/>
            <person name="Preston G.M."/>
            <person name="Zhang X.-X."/>
            <person name="Moon C.D."/>
            <person name="Gehrig S.M."/>
            <person name="Godfrey S.A.C."/>
            <person name="Knight C.G."/>
            <person name="Malone J.G."/>
            <person name="Robinson Z."/>
            <person name="Spiers A.J."/>
            <person name="Harris S."/>
            <person name="Challis G.L."/>
            <person name="Yaxley A.M."/>
            <person name="Harris D."/>
            <person name="Seeger K."/>
            <person name="Murphy L."/>
            <person name="Rutter S."/>
            <person name="Squares R."/>
            <person name="Quail M.A."/>
            <person name="Saunders E."/>
            <person name="Mavromatis K."/>
            <person name="Brettin T.S."/>
            <person name="Bentley S.D."/>
            <person name="Hothersall J."/>
            <person name="Stephens E."/>
            <person name="Thomas C.M."/>
            <person name="Parkhill J."/>
            <person name="Levy S.B."/>
            <person name="Rainey P.B."/>
            <person name="Thomson N.R."/>
        </authorList>
    </citation>
    <scope>NUCLEOTIDE SEQUENCE [LARGE SCALE GENOMIC DNA]</scope>
    <source>
        <strain>Pf0-1</strain>
    </source>
</reference>
<protein>
    <recommendedName>
        <fullName evidence="1">Glycine dehydrogenase (decarboxylating) 1</fullName>
        <ecNumber evidence="1">1.4.4.2</ecNumber>
    </recommendedName>
    <alternativeName>
        <fullName evidence="1">Glycine cleavage system P-protein 1</fullName>
    </alternativeName>
    <alternativeName>
        <fullName evidence="1">Glycine decarboxylase 1</fullName>
    </alternativeName>
    <alternativeName>
        <fullName evidence="1">Glycine dehydrogenase (aminomethyl-transferring) 1</fullName>
    </alternativeName>
</protein>
<name>GCSP1_PSEPF</name>
<dbReference type="EC" id="1.4.4.2" evidence="1"/>
<dbReference type="EMBL" id="CP000094">
    <property type="protein sequence ID" value="ABA76129.1"/>
    <property type="molecule type" value="Genomic_DNA"/>
</dbReference>
<dbReference type="SMR" id="Q3K7X5"/>
<dbReference type="KEGG" id="pfo:Pfl01_4392"/>
<dbReference type="eggNOG" id="COG0403">
    <property type="taxonomic scope" value="Bacteria"/>
</dbReference>
<dbReference type="eggNOG" id="COG1003">
    <property type="taxonomic scope" value="Bacteria"/>
</dbReference>
<dbReference type="HOGENOM" id="CLU_004620_3_2_6"/>
<dbReference type="Proteomes" id="UP000002704">
    <property type="component" value="Chromosome"/>
</dbReference>
<dbReference type="GO" id="GO:0005829">
    <property type="term" value="C:cytosol"/>
    <property type="evidence" value="ECO:0007669"/>
    <property type="project" value="TreeGrafter"/>
</dbReference>
<dbReference type="GO" id="GO:0005960">
    <property type="term" value="C:glycine cleavage complex"/>
    <property type="evidence" value="ECO:0007669"/>
    <property type="project" value="TreeGrafter"/>
</dbReference>
<dbReference type="GO" id="GO:0016594">
    <property type="term" value="F:glycine binding"/>
    <property type="evidence" value="ECO:0007669"/>
    <property type="project" value="TreeGrafter"/>
</dbReference>
<dbReference type="GO" id="GO:0004375">
    <property type="term" value="F:glycine dehydrogenase (decarboxylating) activity"/>
    <property type="evidence" value="ECO:0007669"/>
    <property type="project" value="UniProtKB-EC"/>
</dbReference>
<dbReference type="GO" id="GO:0030170">
    <property type="term" value="F:pyridoxal phosphate binding"/>
    <property type="evidence" value="ECO:0007669"/>
    <property type="project" value="TreeGrafter"/>
</dbReference>
<dbReference type="GO" id="GO:0019464">
    <property type="term" value="P:glycine decarboxylation via glycine cleavage system"/>
    <property type="evidence" value="ECO:0007669"/>
    <property type="project" value="UniProtKB-UniRule"/>
</dbReference>
<dbReference type="CDD" id="cd00613">
    <property type="entry name" value="GDC-P"/>
    <property type="match status" value="1"/>
</dbReference>
<dbReference type="FunFam" id="3.90.1150.10:FF:000025">
    <property type="entry name" value="Glycine cleavage system P protein"/>
    <property type="match status" value="1"/>
</dbReference>
<dbReference type="FunFam" id="3.40.640.10:FF:000005">
    <property type="entry name" value="Glycine dehydrogenase (decarboxylating), mitochondrial"/>
    <property type="match status" value="1"/>
</dbReference>
<dbReference type="FunFam" id="3.90.1150.10:FF:000007">
    <property type="entry name" value="Glycine dehydrogenase (decarboxylating), mitochondrial"/>
    <property type="match status" value="1"/>
</dbReference>
<dbReference type="FunFam" id="3.40.640.10:FF:000007">
    <property type="entry name" value="glycine dehydrogenase (Decarboxylating), mitochondrial"/>
    <property type="match status" value="1"/>
</dbReference>
<dbReference type="Gene3D" id="3.90.1150.10">
    <property type="entry name" value="Aspartate Aminotransferase, domain 1"/>
    <property type="match status" value="2"/>
</dbReference>
<dbReference type="Gene3D" id="3.40.640.10">
    <property type="entry name" value="Type I PLP-dependent aspartate aminotransferase-like (Major domain)"/>
    <property type="match status" value="2"/>
</dbReference>
<dbReference type="HAMAP" id="MF_00711">
    <property type="entry name" value="GcvP"/>
    <property type="match status" value="1"/>
</dbReference>
<dbReference type="InterPro" id="IPR003437">
    <property type="entry name" value="GcvP"/>
</dbReference>
<dbReference type="InterPro" id="IPR049316">
    <property type="entry name" value="GDC-P_C"/>
</dbReference>
<dbReference type="InterPro" id="IPR049315">
    <property type="entry name" value="GDC-P_N"/>
</dbReference>
<dbReference type="InterPro" id="IPR020581">
    <property type="entry name" value="GDC_P"/>
</dbReference>
<dbReference type="InterPro" id="IPR015424">
    <property type="entry name" value="PyrdxlP-dep_Trfase"/>
</dbReference>
<dbReference type="InterPro" id="IPR015421">
    <property type="entry name" value="PyrdxlP-dep_Trfase_major"/>
</dbReference>
<dbReference type="InterPro" id="IPR015422">
    <property type="entry name" value="PyrdxlP-dep_Trfase_small"/>
</dbReference>
<dbReference type="NCBIfam" id="TIGR00461">
    <property type="entry name" value="gcvP"/>
    <property type="match status" value="1"/>
</dbReference>
<dbReference type="NCBIfam" id="NF003346">
    <property type="entry name" value="PRK04366.1"/>
    <property type="match status" value="1"/>
</dbReference>
<dbReference type="PANTHER" id="PTHR11773:SF1">
    <property type="entry name" value="GLYCINE DEHYDROGENASE (DECARBOXYLATING), MITOCHONDRIAL"/>
    <property type="match status" value="1"/>
</dbReference>
<dbReference type="PANTHER" id="PTHR11773">
    <property type="entry name" value="GLYCINE DEHYDROGENASE, DECARBOXYLATING"/>
    <property type="match status" value="1"/>
</dbReference>
<dbReference type="Pfam" id="PF21478">
    <property type="entry name" value="GcvP2_C"/>
    <property type="match status" value="1"/>
</dbReference>
<dbReference type="Pfam" id="PF02347">
    <property type="entry name" value="GDC-P"/>
    <property type="match status" value="2"/>
</dbReference>
<dbReference type="SUPFAM" id="SSF53383">
    <property type="entry name" value="PLP-dependent transferases"/>
    <property type="match status" value="2"/>
</dbReference>
<organism>
    <name type="scientific">Pseudomonas fluorescens (strain Pf0-1)</name>
    <dbReference type="NCBI Taxonomy" id="205922"/>
    <lineage>
        <taxon>Bacteria</taxon>
        <taxon>Pseudomonadati</taxon>
        <taxon>Pseudomonadota</taxon>
        <taxon>Gammaproteobacteria</taxon>
        <taxon>Pseudomonadales</taxon>
        <taxon>Pseudomonadaceae</taxon>
        <taxon>Pseudomonas</taxon>
    </lineage>
</organism>